<gene>
    <name evidence="7" type="primary">mph1</name>
    <name evidence="7" type="synonym">mps1</name>
    <name type="ORF">SPBC106.01</name>
    <name type="ORF">SPBC1271.16c</name>
    <name type="ORF">SPBC243.01</name>
</gene>
<evidence type="ECO:0000255" key="1">
    <source>
        <dbReference type="PROSITE-ProRule" id="PRU00159"/>
    </source>
</evidence>
<evidence type="ECO:0000255" key="2">
    <source>
        <dbReference type="PROSITE-ProRule" id="PRU10027"/>
    </source>
</evidence>
<evidence type="ECO:0000256" key="3">
    <source>
        <dbReference type="SAM" id="MobiDB-lite"/>
    </source>
</evidence>
<evidence type="ECO:0000269" key="4">
    <source>
    </source>
</evidence>
<evidence type="ECO:0000269" key="5">
    <source>
    </source>
</evidence>
<evidence type="ECO:0000269" key="6">
    <source>
    </source>
</evidence>
<evidence type="ECO:0000312" key="7">
    <source>
        <dbReference type="PomBase" id="SPBC106.01"/>
    </source>
</evidence>
<keyword id="KW-0067">ATP-binding</keyword>
<keyword id="KW-0131">Cell cycle</keyword>
<keyword id="KW-0132">Cell division</keyword>
<keyword id="KW-0418">Kinase</keyword>
<keyword id="KW-0498">Mitosis</keyword>
<keyword id="KW-0547">Nucleotide-binding</keyword>
<keyword id="KW-1185">Reference proteome</keyword>
<keyword id="KW-0723">Serine/threonine-protein kinase</keyword>
<keyword id="KW-0808">Transferase</keyword>
<protein>
    <recommendedName>
        <fullName>Serine/threonine-protein kinase mph1</fullName>
        <ecNumber evidence="4 5">2.7.12.1</ecNumber>
    </recommendedName>
</protein>
<reference key="1">
    <citation type="journal article" date="1998" name="J. Cell Sci.">
        <title>Mph1, a member of the Mps1-like family of dual specificity protein kinases, is required for the spindle checkpoint in S. pombe.</title>
        <authorList>
            <person name="He X."/>
            <person name="Jones M.H."/>
            <person name="Winey M."/>
            <person name="Sazer S."/>
        </authorList>
    </citation>
    <scope>NUCLEOTIDE SEQUENCE [MRNA]</scope>
    <scope>FUNCTION</scope>
</reference>
<reference key="2">
    <citation type="journal article" date="2002" name="Nature">
        <title>The genome sequence of Schizosaccharomyces pombe.</title>
        <authorList>
            <person name="Wood V."/>
            <person name="Gwilliam R."/>
            <person name="Rajandream M.A."/>
            <person name="Lyne M.H."/>
            <person name="Lyne R."/>
            <person name="Stewart A."/>
            <person name="Sgouros J.G."/>
            <person name="Peat N."/>
            <person name="Hayles J."/>
            <person name="Baker S.G."/>
            <person name="Basham D."/>
            <person name="Bowman S."/>
            <person name="Brooks K."/>
            <person name="Brown D."/>
            <person name="Brown S."/>
            <person name="Chillingworth T."/>
            <person name="Churcher C.M."/>
            <person name="Collins M."/>
            <person name="Connor R."/>
            <person name="Cronin A."/>
            <person name="Davis P."/>
            <person name="Feltwell T."/>
            <person name="Fraser A."/>
            <person name="Gentles S."/>
            <person name="Goble A."/>
            <person name="Hamlin N."/>
            <person name="Harris D.E."/>
            <person name="Hidalgo J."/>
            <person name="Hodgson G."/>
            <person name="Holroyd S."/>
            <person name="Hornsby T."/>
            <person name="Howarth S."/>
            <person name="Huckle E.J."/>
            <person name="Hunt S."/>
            <person name="Jagels K."/>
            <person name="James K.D."/>
            <person name="Jones L."/>
            <person name="Jones M."/>
            <person name="Leather S."/>
            <person name="McDonald S."/>
            <person name="McLean J."/>
            <person name="Mooney P."/>
            <person name="Moule S."/>
            <person name="Mungall K.L."/>
            <person name="Murphy L.D."/>
            <person name="Niblett D."/>
            <person name="Odell C."/>
            <person name="Oliver K."/>
            <person name="O'Neil S."/>
            <person name="Pearson D."/>
            <person name="Quail M.A."/>
            <person name="Rabbinowitsch E."/>
            <person name="Rutherford K.M."/>
            <person name="Rutter S."/>
            <person name="Saunders D."/>
            <person name="Seeger K."/>
            <person name="Sharp S."/>
            <person name="Skelton J."/>
            <person name="Simmonds M.N."/>
            <person name="Squares R."/>
            <person name="Squares S."/>
            <person name="Stevens K."/>
            <person name="Taylor K."/>
            <person name="Taylor R.G."/>
            <person name="Tivey A."/>
            <person name="Walsh S.V."/>
            <person name="Warren T."/>
            <person name="Whitehead S."/>
            <person name="Woodward J.R."/>
            <person name="Volckaert G."/>
            <person name="Aert R."/>
            <person name="Robben J."/>
            <person name="Grymonprez B."/>
            <person name="Weltjens I."/>
            <person name="Vanstreels E."/>
            <person name="Rieger M."/>
            <person name="Schaefer M."/>
            <person name="Mueller-Auer S."/>
            <person name="Gabel C."/>
            <person name="Fuchs M."/>
            <person name="Duesterhoeft A."/>
            <person name="Fritzc C."/>
            <person name="Holzer E."/>
            <person name="Moestl D."/>
            <person name="Hilbert H."/>
            <person name="Borzym K."/>
            <person name="Langer I."/>
            <person name="Beck A."/>
            <person name="Lehrach H."/>
            <person name="Reinhardt R."/>
            <person name="Pohl T.M."/>
            <person name="Eger P."/>
            <person name="Zimmermann W."/>
            <person name="Wedler H."/>
            <person name="Wambutt R."/>
            <person name="Purnelle B."/>
            <person name="Goffeau A."/>
            <person name="Cadieu E."/>
            <person name="Dreano S."/>
            <person name="Gloux S."/>
            <person name="Lelaure V."/>
            <person name="Mottier S."/>
            <person name="Galibert F."/>
            <person name="Aves S.J."/>
            <person name="Xiang Z."/>
            <person name="Hunt C."/>
            <person name="Moore K."/>
            <person name="Hurst S.M."/>
            <person name="Lucas M."/>
            <person name="Rochet M."/>
            <person name="Gaillardin C."/>
            <person name="Tallada V.A."/>
            <person name="Garzon A."/>
            <person name="Thode G."/>
            <person name="Daga R.R."/>
            <person name="Cruzado L."/>
            <person name="Jimenez J."/>
            <person name="Sanchez M."/>
            <person name="del Rey F."/>
            <person name="Benito J."/>
            <person name="Dominguez A."/>
            <person name="Revuelta J.L."/>
            <person name="Moreno S."/>
            <person name="Armstrong J."/>
            <person name="Forsburg S.L."/>
            <person name="Cerutti L."/>
            <person name="Lowe T."/>
            <person name="McCombie W.R."/>
            <person name="Paulsen I."/>
            <person name="Potashkin J."/>
            <person name="Shpakovski G.V."/>
            <person name="Ussery D."/>
            <person name="Barrell B.G."/>
            <person name="Nurse P."/>
        </authorList>
    </citation>
    <scope>NUCLEOTIDE SEQUENCE [LARGE SCALE GENOMIC DNA]</scope>
    <source>
        <strain>972 / ATCC 24843</strain>
    </source>
</reference>
<reference key="3">
    <citation type="journal article" date="2012" name="Curr. Biol.">
        <title>Phosphodependent recruitment of Bub1 and Bub3 to Spc7/KNL1 by Mph1 kinase maintains the spindle checkpoint.</title>
        <authorList>
            <person name="Shepperd L.A."/>
            <person name="Meadows J.C."/>
            <person name="Sochaj A.M."/>
            <person name="Lancaster T.C."/>
            <person name="Zou J."/>
            <person name="Buttrick G.J."/>
            <person name="Rappsilber J."/>
            <person name="Hardwick K.G."/>
            <person name="Millar J.B."/>
        </authorList>
    </citation>
    <scope>FUNCTION</scope>
    <scope>CATALYTIC ACTIVITY</scope>
    <scope>DISRUPTION PHENOTYPE</scope>
</reference>
<reference key="4">
    <citation type="journal article" date="2012" name="Nat. Cell Biol.">
        <title>MPS1/Mph1 phosphorylates the kinetochore protein KNL1/Spc7 to recruit SAC components.</title>
        <authorList>
            <person name="Yamagishi Y."/>
            <person name="Yang C.H."/>
            <person name="Tanno Y."/>
            <person name="Watanabe Y."/>
        </authorList>
    </citation>
    <scope>FUNCTION</scope>
    <scope>CATALYTIC ACTIVITY</scope>
    <scope>DISRUPTION PHENOTYPE</scope>
</reference>
<comment type="function">
    <text evidence="4 5 6">Involved in mitotic spindle assembly checkpoint signaling, a process that delays anaphase until chromosomes are bioriented on the spindle, and in the repair of incorrect mitotic kinetochore-spindle microtubule attachments (PubMed:22660415, PubMed:9601094). Phosphorylates spc7/knl1 on MELT motifs; phosphorylation is required for recruitment of the BUB1-BUB3 complex to kinetochores (PubMed:22521786, PubMed:22660415).</text>
</comment>
<comment type="catalytic activity">
    <reaction>
        <text>L-seryl-[protein] + ATP = O-phospho-L-seryl-[protein] + ADP + H(+)</text>
        <dbReference type="Rhea" id="RHEA:17989"/>
        <dbReference type="Rhea" id="RHEA-COMP:9863"/>
        <dbReference type="Rhea" id="RHEA-COMP:11604"/>
        <dbReference type="ChEBI" id="CHEBI:15378"/>
        <dbReference type="ChEBI" id="CHEBI:29999"/>
        <dbReference type="ChEBI" id="CHEBI:30616"/>
        <dbReference type="ChEBI" id="CHEBI:83421"/>
        <dbReference type="ChEBI" id="CHEBI:456216"/>
        <dbReference type="EC" id="2.7.12.1"/>
    </reaction>
</comment>
<comment type="catalytic activity">
    <reaction evidence="4 5">
        <text>L-threonyl-[protein] + ATP = O-phospho-L-threonyl-[protein] + ADP + H(+)</text>
        <dbReference type="Rhea" id="RHEA:46608"/>
        <dbReference type="Rhea" id="RHEA-COMP:11060"/>
        <dbReference type="Rhea" id="RHEA-COMP:11605"/>
        <dbReference type="ChEBI" id="CHEBI:15378"/>
        <dbReference type="ChEBI" id="CHEBI:30013"/>
        <dbReference type="ChEBI" id="CHEBI:30616"/>
        <dbReference type="ChEBI" id="CHEBI:61977"/>
        <dbReference type="ChEBI" id="CHEBI:456216"/>
        <dbReference type="EC" id="2.7.12.1"/>
    </reaction>
</comment>
<comment type="catalytic activity">
    <reaction>
        <text>L-tyrosyl-[protein] + ATP = O-phospho-L-tyrosyl-[protein] + ADP + H(+)</text>
        <dbReference type="Rhea" id="RHEA:10596"/>
        <dbReference type="Rhea" id="RHEA-COMP:10136"/>
        <dbReference type="Rhea" id="RHEA-COMP:20101"/>
        <dbReference type="ChEBI" id="CHEBI:15378"/>
        <dbReference type="ChEBI" id="CHEBI:30616"/>
        <dbReference type="ChEBI" id="CHEBI:46858"/>
        <dbReference type="ChEBI" id="CHEBI:61978"/>
        <dbReference type="ChEBI" id="CHEBI:456216"/>
        <dbReference type="EC" id="2.7.12.1"/>
    </reaction>
</comment>
<comment type="disruption phenotype">
    <text evidence="4 5">Leads to chromosome segregation defects (PubMed:22521786). Sensitive to thiabendazole (TBZ) (PubMed:22660415).</text>
</comment>
<comment type="similarity">
    <text evidence="1">Belongs to the protein kinase superfamily. Ser/Thr protein kinase family.</text>
</comment>
<organism>
    <name type="scientific">Schizosaccharomyces pombe (strain 972 / ATCC 24843)</name>
    <name type="common">Fission yeast</name>
    <dbReference type="NCBI Taxonomy" id="284812"/>
    <lineage>
        <taxon>Eukaryota</taxon>
        <taxon>Fungi</taxon>
        <taxon>Dikarya</taxon>
        <taxon>Ascomycota</taxon>
        <taxon>Taphrinomycotina</taxon>
        <taxon>Schizosaccharomycetes</taxon>
        <taxon>Schizosaccharomycetales</taxon>
        <taxon>Schizosaccharomycetaceae</taxon>
        <taxon>Schizosaccharomyces</taxon>
    </lineage>
</organism>
<feature type="chain" id="PRO_0000086389" description="Serine/threonine-protein kinase mph1">
    <location>
        <begin position="1"/>
        <end position="678"/>
    </location>
</feature>
<feature type="domain" description="Protein kinase" evidence="1">
    <location>
        <begin position="316"/>
        <end position="607"/>
    </location>
</feature>
<feature type="region of interest" description="Disordered" evidence="3">
    <location>
        <begin position="39"/>
        <end position="93"/>
    </location>
</feature>
<feature type="region of interest" description="Disordered" evidence="3">
    <location>
        <begin position="114"/>
        <end position="209"/>
    </location>
</feature>
<feature type="compositionally biased region" description="Polar residues" evidence="3">
    <location>
        <begin position="41"/>
        <end position="66"/>
    </location>
</feature>
<feature type="compositionally biased region" description="Polar residues" evidence="3">
    <location>
        <begin position="114"/>
        <end position="125"/>
    </location>
</feature>
<feature type="active site" description="Proton acceptor" evidence="1 2">
    <location>
        <position position="442"/>
    </location>
</feature>
<feature type="binding site" evidence="1">
    <location>
        <begin position="322"/>
        <end position="330"/>
    </location>
    <ligand>
        <name>ATP</name>
        <dbReference type="ChEBI" id="CHEBI:30616"/>
    </ligand>
</feature>
<feature type="binding site" evidence="1">
    <location>
        <position position="345"/>
    </location>
    <ligand>
        <name>ATP</name>
        <dbReference type="ChEBI" id="CHEBI:30616"/>
    </ligand>
</feature>
<dbReference type="EC" id="2.7.12.1" evidence="4 5"/>
<dbReference type="EMBL" id="AF020705">
    <property type="protein sequence ID" value="AAD01648.1"/>
    <property type="molecule type" value="mRNA"/>
</dbReference>
<dbReference type="EMBL" id="CU329671">
    <property type="protein sequence ID" value="CAB72266.2"/>
    <property type="molecule type" value="Genomic_DNA"/>
</dbReference>
<dbReference type="PIR" id="T43539">
    <property type="entry name" value="T43539"/>
</dbReference>
<dbReference type="RefSeq" id="NP_595150.2">
    <property type="nucleotide sequence ID" value="NM_001021059.3"/>
</dbReference>
<dbReference type="SMR" id="O94235"/>
<dbReference type="BioGRID" id="276598">
    <property type="interactions" value="254"/>
</dbReference>
<dbReference type="DIP" id="DIP-61850N"/>
<dbReference type="FunCoup" id="O94235">
    <property type="interactions" value="237"/>
</dbReference>
<dbReference type="IntAct" id="O94235">
    <property type="interactions" value="1"/>
</dbReference>
<dbReference type="STRING" id="284812.O94235"/>
<dbReference type="iPTMnet" id="O94235"/>
<dbReference type="PaxDb" id="4896-SPBC106.01.1"/>
<dbReference type="EnsemblFungi" id="SPBC106.01.1">
    <property type="protein sequence ID" value="SPBC106.01.1:pep"/>
    <property type="gene ID" value="SPBC106.01"/>
</dbReference>
<dbReference type="GeneID" id="2540060"/>
<dbReference type="KEGG" id="spo:2540060"/>
<dbReference type="PomBase" id="SPBC106.01">
    <property type="gene designation" value="mph1"/>
</dbReference>
<dbReference type="VEuPathDB" id="FungiDB:SPBC106.01"/>
<dbReference type="eggNOG" id="KOG0596">
    <property type="taxonomic scope" value="Eukaryota"/>
</dbReference>
<dbReference type="HOGENOM" id="CLU_406608_0_0_1"/>
<dbReference type="InParanoid" id="O94235"/>
<dbReference type="OMA" id="HLKMIQA"/>
<dbReference type="PhylomeDB" id="O94235"/>
<dbReference type="PRO" id="PR:O94235"/>
<dbReference type="Proteomes" id="UP000002485">
    <property type="component" value="Chromosome II"/>
</dbReference>
<dbReference type="GO" id="GO:0005829">
    <property type="term" value="C:cytosol"/>
    <property type="evidence" value="ECO:0007005"/>
    <property type="project" value="PomBase"/>
</dbReference>
<dbReference type="GO" id="GO:0000776">
    <property type="term" value="C:kinetochore"/>
    <property type="evidence" value="ECO:0000314"/>
    <property type="project" value="PomBase"/>
</dbReference>
<dbReference type="GO" id="GO:0005634">
    <property type="term" value="C:nucleus"/>
    <property type="evidence" value="ECO:0007005"/>
    <property type="project" value="PomBase"/>
</dbReference>
<dbReference type="GO" id="GO:0005524">
    <property type="term" value="F:ATP binding"/>
    <property type="evidence" value="ECO:0007669"/>
    <property type="project" value="UniProtKB-KW"/>
</dbReference>
<dbReference type="GO" id="GO:0106310">
    <property type="term" value="F:protein serine kinase activity"/>
    <property type="evidence" value="ECO:0007669"/>
    <property type="project" value="RHEA"/>
</dbReference>
<dbReference type="GO" id="GO:0004674">
    <property type="term" value="F:protein serine/threonine kinase activity"/>
    <property type="evidence" value="ECO:0000314"/>
    <property type="project" value="PomBase"/>
</dbReference>
<dbReference type="GO" id="GO:0004712">
    <property type="term" value="F:protein serine/threonine/tyrosine kinase activity"/>
    <property type="evidence" value="ECO:0000318"/>
    <property type="project" value="GO_Central"/>
</dbReference>
<dbReference type="GO" id="GO:0004713">
    <property type="term" value="F:protein tyrosine kinase activity"/>
    <property type="evidence" value="ECO:0007669"/>
    <property type="project" value="RHEA"/>
</dbReference>
<dbReference type="GO" id="GO:0051301">
    <property type="term" value="P:cell division"/>
    <property type="evidence" value="ECO:0007669"/>
    <property type="project" value="UniProtKB-KW"/>
</dbReference>
<dbReference type="GO" id="GO:0007059">
    <property type="term" value="P:chromosome segregation"/>
    <property type="evidence" value="ECO:0000318"/>
    <property type="project" value="GO_Central"/>
</dbReference>
<dbReference type="GO" id="GO:0007127">
    <property type="term" value="P:meiosis I"/>
    <property type="evidence" value="ECO:0000315"/>
    <property type="project" value="PomBase"/>
</dbReference>
<dbReference type="GO" id="GO:1990813">
    <property type="term" value="P:meiotic centromeric cohesion protection in anaphase I"/>
    <property type="evidence" value="ECO:0000315"/>
    <property type="project" value="PomBase"/>
</dbReference>
<dbReference type="GO" id="GO:0033316">
    <property type="term" value="P:meiotic spindle assembly checkpoint signaling"/>
    <property type="evidence" value="ECO:0000318"/>
    <property type="project" value="GO_Central"/>
</dbReference>
<dbReference type="GO" id="GO:0007094">
    <property type="term" value="P:mitotic spindle assembly checkpoint signaling"/>
    <property type="evidence" value="ECO:0000315"/>
    <property type="project" value="PomBase"/>
</dbReference>
<dbReference type="GO" id="GO:0034501">
    <property type="term" value="P:protein localization to kinetochore"/>
    <property type="evidence" value="ECO:0000318"/>
    <property type="project" value="GO_Central"/>
</dbReference>
<dbReference type="CDD" id="cd14131">
    <property type="entry name" value="PKc_Mps1"/>
    <property type="match status" value="1"/>
</dbReference>
<dbReference type="FunFam" id="3.30.200.20:FF:000131">
    <property type="entry name" value="Dual specificity protein kinase TTK"/>
    <property type="match status" value="1"/>
</dbReference>
<dbReference type="FunFam" id="1.10.510.10:FF:000224">
    <property type="entry name" value="serine/threonine-protein kinase mph1 isoform X1"/>
    <property type="match status" value="1"/>
</dbReference>
<dbReference type="Gene3D" id="3.30.200.20">
    <property type="entry name" value="Phosphorylase Kinase, domain 1"/>
    <property type="match status" value="1"/>
</dbReference>
<dbReference type="Gene3D" id="1.10.510.10">
    <property type="entry name" value="Transferase(Phosphotransferase) domain 1"/>
    <property type="match status" value="1"/>
</dbReference>
<dbReference type="InterPro" id="IPR011009">
    <property type="entry name" value="Kinase-like_dom_sf"/>
</dbReference>
<dbReference type="InterPro" id="IPR027084">
    <property type="entry name" value="Mps1_cat"/>
</dbReference>
<dbReference type="InterPro" id="IPR000719">
    <property type="entry name" value="Prot_kinase_dom"/>
</dbReference>
<dbReference type="InterPro" id="IPR017441">
    <property type="entry name" value="Protein_kinase_ATP_BS"/>
</dbReference>
<dbReference type="InterPro" id="IPR008271">
    <property type="entry name" value="Ser/Thr_kinase_AS"/>
</dbReference>
<dbReference type="PANTHER" id="PTHR22974:SF21">
    <property type="entry name" value="DUAL SPECIFICITY PROTEIN KINASE TTK"/>
    <property type="match status" value="1"/>
</dbReference>
<dbReference type="PANTHER" id="PTHR22974">
    <property type="entry name" value="MIXED LINEAGE PROTEIN KINASE"/>
    <property type="match status" value="1"/>
</dbReference>
<dbReference type="Pfam" id="PF00069">
    <property type="entry name" value="Pkinase"/>
    <property type="match status" value="1"/>
</dbReference>
<dbReference type="SMART" id="SM00220">
    <property type="entry name" value="S_TKc"/>
    <property type="match status" value="1"/>
</dbReference>
<dbReference type="SUPFAM" id="SSF56112">
    <property type="entry name" value="Protein kinase-like (PK-like)"/>
    <property type="match status" value="1"/>
</dbReference>
<dbReference type="PROSITE" id="PS00107">
    <property type="entry name" value="PROTEIN_KINASE_ATP"/>
    <property type="match status" value="1"/>
</dbReference>
<dbReference type="PROSITE" id="PS50011">
    <property type="entry name" value="PROTEIN_KINASE_DOM"/>
    <property type="match status" value="1"/>
</dbReference>
<dbReference type="PROSITE" id="PS00108">
    <property type="entry name" value="PROTEIN_KINASE_ST"/>
    <property type="match status" value="1"/>
</dbReference>
<name>MPS1_SCHPO</name>
<sequence length="678" mass="75354">MSKRNPPVTNIADLVSDSSLDEDSLSFLEELQDPELYFKNDTFSSKSSHSDGTVTGDTLRRQSSGATALERLVSHPRTKNFDLQGNGGQNSALKEVNTPAYQSMHHFEHLITPLPSTNASHSEVSLSAGVNDLNSNSEHDLLPKSVNKTPGSLSISRRRRIGRIGLGPPKRAEYTLTDPSKTSDTKNSTEADEDIEMKSREVSPASNSVAATTLKPLQLHNTPLQTSQEHPKPSFHPSQFESSFSPRVQFDHDVERRASELHSRPVTVFQEPQRSASQPYESHALSPKVAPLFDNSQATPIPKRQQDVVTVANLQFIKLGVVGKGGSSMVYRIFSPDNSRLYALKEVNFINADQTTIQGYKNEIALLRKLSGNDRIIKLYAAEVNDTLGQLNMVMECGETDLANLLMKNMKKPINLNFIRMYWEQMLEAVQVVHDQNIVHSDLKPANFLLVEGNLKLIDFGIAKAIGNDTTNIHRDSHIGTINYMAPEALTDMNAHTNSGVKLVKLGRPSDVWSLGCILYQMVYGRAPFAHLKMIQAIAAIPNEQYHIHFPEVALPANAVQEKEGSLPGVTVGPDLMDVMKRCLERDQRKRLTIPELLVHPFLNPLPSYLTPLAKKPLPVSGHTNNAHPLRLSTEISASQLSMIIERSVELSKHKRLNKELIDSMAYDCVSNLRKMPE</sequence>
<proteinExistence type="evidence at protein level"/>
<accession>O94235</accession>
<accession>Q9P7Z5</accession>
<accession>Q9URW0</accession>